<name>HTF_LUCSU</name>
<protein>
    <recommendedName>
        <fullName evidence="1">Hypertrehalosaemic factor</fullName>
    </recommendedName>
    <alternativeName>
        <fullName evidence="4">Adipokinetic hormone 1</fullName>
        <shortName evidence="4">LucSu-AKH-1</shortName>
    </alternativeName>
    <alternativeName>
        <fullName evidence="1">Hypertrehalosaemic neuropeptide</fullName>
    </alternativeName>
</protein>
<keyword id="KW-0027">Amidation</keyword>
<keyword id="KW-0903">Direct protein sequencing</keyword>
<keyword id="KW-0372">Hormone</keyword>
<keyword id="KW-0527">Neuropeptide</keyword>
<keyword id="KW-0873">Pyrrolidone carboxylic acid</keyword>
<keyword id="KW-0964">Secreted</keyword>
<organism>
    <name type="scientific">Lucihormetica subcincta</name>
    <name type="common">Glow spot roach</name>
    <dbReference type="NCBI Taxonomy" id="406666"/>
    <lineage>
        <taxon>Eukaryota</taxon>
        <taxon>Metazoa</taxon>
        <taxon>Ecdysozoa</taxon>
        <taxon>Arthropoda</taxon>
        <taxon>Hexapoda</taxon>
        <taxon>Insecta</taxon>
        <taxon>Pterygota</taxon>
        <taxon>Neoptera</taxon>
        <taxon>Polyneoptera</taxon>
        <taxon>Dictyoptera</taxon>
        <taxon>Blattodea</taxon>
        <taxon>Blaberoidea</taxon>
        <taxon>Blaberidae</taxon>
        <taxon>Blaberinae</taxon>
        <taxon>Lucihormetica</taxon>
    </lineage>
</organism>
<accession>P85670</accession>
<comment type="function">
    <text evidence="5">Hypertrehalosaemic factors are neuropeptides that elevate the level of trehalose in the hemolymph (trehalose is the major carbohydrate in the hemolymph of insects).</text>
</comment>
<comment type="subcellular location">
    <subcellularLocation>
        <location evidence="5">Secreted</location>
    </subcellularLocation>
</comment>
<comment type="similarity">
    <text evidence="2">Belongs to the AKH/HRTH/RPCH family.</text>
</comment>
<evidence type="ECO:0000250" key="1">
    <source>
        <dbReference type="UniProtKB" id="P67790"/>
    </source>
</evidence>
<evidence type="ECO:0000255" key="2"/>
<evidence type="ECO:0000269" key="3">
    <source>
    </source>
</evidence>
<evidence type="ECO:0000303" key="4">
    <source>
    </source>
</evidence>
<evidence type="ECO:0000305" key="5"/>
<reference evidence="5" key="1">
    <citation type="journal article" date="2009" name="BMC Evol. Biol.">
        <title>A proteomic approach for studying insect phylogeny: CAPA peptides of ancient insect taxa (Dictyoptera, Blattoptera) as a test case.</title>
        <authorList>
            <person name="Roth S."/>
            <person name="Fromm B."/>
            <person name="Gaede G."/>
            <person name="Predel R."/>
        </authorList>
    </citation>
    <scope>PROTEIN SEQUENCE</scope>
    <scope>PYROGLUTAMATE FORMATION AT GLN-1</scope>
    <scope>AMIDATION AT THR-10</scope>
    <source>
        <tissue evidence="3">Corpora cardiaca</tissue>
    </source>
</reference>
<feature type="peptide" id="PRO_0000378655" description="Hypertrehalosaemic factor" evidence="3">
    <location>
        <begin position="1"/>
        <end position="10"/>
    </location>
</feature>
<feature type="modified residue" description="Pyrrolidone carboxylic acid" evidence="3">
    <location>
        <position position="1"/>
    </location>
</feature>
<feature type="modified residue" description="Threonine amide" evidence="3">
    <location>
        <position position="10"/>
    </location>
</feature>
<proteinExistence type="evidence at protein level"/>
<dbReference type="GO" id="GO:0005576">
    <property type="term" value="C:extracellular region"/>
    <property type="evidence" value="ECO:0007669"/>
    <property type="project" value="UniProtKB-SubCell"/>
</dbReference>
<dbReference type="GO" id="GO:0005179">
    <property type="term" value="F:hormone activity"/>
    <property type="evidence" value="ECO:0007669"/>
    <property type="project" value="UniProtKB-KW"/>
</dbReference>
<dbReference type="GO" id="GO:0007218">
    <property type="term" value="P:neuropeptide signaling pathway"/>
    <property type="evidence" value="ECO:0007669"/>
    <property type="project" value="UniProtKB-KW"/>
</dbReference>
<dbReference type="InterPro" id="IPR002047">
    <property type="entry name" value="Adipokinetic_hormone_CS"/>
</dbReference>
<dbReference type="PROSITE" id="PS00256">
    <property type="entry name" value="AKH"/>
    <property type="match status" value="1"/>
</dbReference>
<sequence>QVNFSPGWGT</sequence>